<gene>
    <name evidence="1" type="primary">lpxC</name>
    <name type="ordered locus">Swoo_4528</name>
</gene>
<comment type="function">
    <text evidence="1">Catalyzes the hydrolysis of UDP-3-O-myristoyl-N-acetylglucosamine to form UDP-3-O-myristoylglucosamine and acetate, the committed step in lipid A biosynthesis.</text>
</comment>
<comment type="catalytic activity">
    <reaction evidence="1">
        <text>a UDP-3-O-[(3R)-3-hydroxyacyl]-N-acetyl-alpha-D-glucosamine + H2O = a UDP-3-O-[(3R)-3-hydroxyacyl]-alpha-D-glucosamine + acetate</text>
        <dbReference type="Rhea" id="RHEA:67816"/>
        <dbReference type="ChEBI" id="CHEBI:15377"/>
        <dbReference type="ChEBI" id="CHEBI:30089"/>
        <dbReference type="ChEBI" id="CHEBI:137740"/>
        <dbReference type="ChEBI" id="CHEBI:173225"/>
        <dbReference type="EC" id="3.5.1.108"/>
    </reaction>
</comment>
<comment type="cofactor">
    <cofactor evidence="1">
        <name>Zn(2+)</name>
        <dbReference type="ChEBI" id="CHEBI:29105"/>
    </cofactor>
</comment>
<comment type="pathway">
    <text evidence="1">Glycolipid biosynthesis; lipid IV(A) biosynthesis; lipid IV(A) from (3R)-3-hydroxytetradecanoyl-[acyl-carrier-protein] and UDP-N-acetyl-alpha-D-glucosamine: step 2/6.</text>
</comment>
<comment type="similarity">
    <text evidence="1">Belongs to the LpxC family.</text>
</comment>
<evidence type="ECO:0000255" key="1">
    <source>
        <dbReference type="HAMAP-Rule" id="MF_00388"/>
    </source>
</evidence>
<accession>B1KKX2</accession>
<sequence length="305" mass="33648">MIFQRTVKEMVKTTGVGLHSGNKVTLSIKPAPVNYGIVLVRTDLEPAVSIPAKADQVRETTMCTALVNDDGVRISTIEHLFAALAGLGIDNALIEVDAPEIPIMDGSASPWVFLLQSVGIQEQSAAKKYLRIKDTIRVEDGDKWAELKPFNGFRVDFAIDFNHPEIARSQQHMVMDFSTSAFVRDISRARTFGFMRDIEYLRANNLALGGSMENAVVLDEYKVLNPDGLRYEDEFVKHKILDAFGDLYVAGHAIVGEFCAFKTGHALNNQLVRALLAQQDAWELVSFEKDEAPVSFSVPAGAVFA</sequence>
<reference key="1">
    <citation type="submission" date="2008-02" db="EMBL/GenBank/DDBJ databases">
        <title>Complete sequence of Shewanella woodyi ATCC 51908.</title>
        <authorList>
            <consortium name="US DOE Joint Genome Institute"/>
            <person name="Copeland A."/>
            <person name="Lucas S."/>
            <person name="Lapidus A."/>
            <person name="Glavina del Rio T."/>
            <person name="Dalin E."/>
            <person name="Tice H."/>
            <person name="Bruce D."/>
            <person name="Goodwin L."/>
            <person name="Pitluck S."/>
            <person name="Sims D."/>
            <person name="Brettin T."/>
            <person name="Detter J.C."/>
            <person name="Han C."/>
            <person name="Kuske C.R."/>
            <person name="Schmutz J."/>
            <person name="Larimer F."/>
            <person name="Land M."/>
            <person name="Hauser L."/>
            <person name="Kyrpides N."/>
            <person name="Lykidis A."/>
            <person name="Zhao J.-S."/>
            <person name="Richardson P."/>
        </authorList>
    </citation>
    <scope>NUCLEOTIDE SEQUENCE [LARGE SCALE GENOMIC DNA]</scope>
    <source>
        <strain>ATCC 51908 / MS32</strain>
    </source>
</reference>
<dbReference type="EC" id="3.5.1.108" evidence="1"/>
<dbReference type="EMBL" id="CP000961">
    <property type="protein sequence ID" value="ACA88778.1"/>
    <property type="molecule type" value="Genomic_DNA"/>
</dbReference>
<dbReference type="RefSeq" id="WP_012327104.1">
    <property type="nucleotide sequence ID" value="NC_010506.1"/>
</dbReference>
<dbReference type="SMR" id="B1KKX2"/>
<dbReference type="STRING" id="392500.Swoo_4528"/>
<dbReference type="KEGG" id="swd:Swoo_4528"/>
<dbReference type="eggNOG" id="COG0774">
    <property type="taxonomic scope" value="Bacteria"/>
</dbReference>
<dbReference type="HOGENOM" id="CLU_046528_1_0_6"/>
<dbReference type="UniPathway" id="UPA00359">
    <property type="reaction ID" value="UER00478"/>
</dbReference>
<dbReference type="Proteomes" id="UP000002168">
    <property type="component" value="Chromosome"/>
</dbReference>
<dbReference type="GO" id="GO:0016020">
    <property type="term" value="C:membrane"/>
    <property type="evidence" value="ECO:0007669"/>
    <property type="project" value="GOC"/>
</dbReference>
<dbReference type="GO" id="GO:0046872">
    <property type="term" value="F:metal ion binding"/>
    <property type="evidence" value="ECO:0007669"/>
    <property type="project" value="UniProtKB-KW"/>
</dbReference>
<dbReference type="GO" id="GO:0103117">
    <property type="term" value="F:UDP-3-O-acyl-N-acetylglucosamine deacetylase activity"/>
    <property type="evidence" value="ECO:0007669"/>
    <property type="project" value="UniProtKB-UniRule"/>
</dbReference>
<dbReference type="GO" id="GO:0009245">
    <property type="term" value="P:lipid A biosynthetic process"/>
    <property type="evidence" value="ECO:0007669"/>
    <property type="project" value="UniProtKB-UniRule"/>
</dbReference>
<dbReference type="Gene3D" id="3.30.230.20">
    <property type="entry name" value="lpxc deacetylase, domain 1"/>
    <property type="match status" value="1"/>
</dbReference>
<dbReference type="Gene3D" id="3.30.1700.10">
    <property type="entry name" value="lpxc deacetylase, domain 2"/>
    <property type="match status" value="1"/>
</dbReference>
<dbReference type="HAMAP" id="MF_00388">
    <property type="entry name" value="LpxC"/>
    <property type="match status" value="1"/>
</dbReference>
<dbReference type="InterPro" id="IPR020568">
    <property type="entry name" value="Ribosomal_Su5_D2-typ_SF"/>
</dbReference>
<dbReference type="InterPro" id="IPR004463">
    <property type="entry name" value="UDP-acyl_GlcNac_deAcase"/>
</dbReference>
<dbReference type="InterPro" id="IPR011334">
    <property type="entry name" value="UDP-acyl_GlcNac_deAcase_C"/>
</dbReference>
<dbReference type="InterPro" id="IPR015870">
    <property type="entry name" value="UDP-acyl_N-AcGlcN_deAcase_N"/>
</dbReference>
<dbReference type="NCBIfam" id="TIGR00325">
    <property type="entry name" value="lpxC"/>
    <property type="match status" value="1"/>
</dbReference>
<dbReference type="PANTHER" id="PTHR33694">
    <property type="entry name" value="UDP-3-O-ACYL-N-ACETYLGLUCOSAMINE DEACETYLASE 1, MITOCHONDRIAL-RELATED"/>
    <property type="match status" value="1"/>
</dbReference>
<dbReference type="PANTHER" id="PTHR33694:SF1">
    <property type="entry name" value="UDP-3-O-ACYL-N-ACETYLGLUCOSAMINE DEACETYLASE 1, MITOCHONDRIAL-RELATED"/>
    <property type="match status" value="1"/>
</dbReference>
<dbReference type="Pfam" id="PF03331">
    <property type="entry name" value="LpxC"/>
    <property type="match status" value="1"/>
</dbReference>
<dbReference type="SUPFAM" id="SSF54211">
    <property type="entry name" value="Ribosomal protein S5 domain 2-like"/>
    <property type="match status" value="2"/>
</dbReference>
<keyword id="KW-0378">Hydrolase</keyword>
<keyword id="KW-0441">Lipid A biosynthesis</keyword>
<keyword id="KW-0444">Lipid biosynthesis</keyword>
<keyword id="KW-0443">Lipid metabolism</keyword>
<keyword id="KW-0479">Metal-binding</keyword>
<keyword id="KW-1185">Reference proteome</keyword>
<keyword id="KW-0862">Zinc</keyword>
<feature type="chain" id="PRO_1000122822" description="UDP-3-O-acyl-N-acetylglucosamine deacetylase">
    <location>
        <begin position="1"/>
        <end position="305"/>
    </location>
</feature>
<feature type="active site" description="Proton donor" evidence="1">
    <location>
        <position position="265"/>
    </location>
</feature>
<feature type="binding site" evidence="1">
    <location>
        <position position="79"/>
    </location>
    <ligand>
        <name>Zn(2+)</name>
        <dbReference type="ChEBI" id="CHEBI:29105"/>
    </ligand>
</feature>
<feature type="binding site" evidence="1">
    <location>
        <position position="238"/>
    </location>
    <ligand>
        <name>Zn(2+)</name>
        <dbReference type="ChEBI" id="CHEBI:29105"/>
    </ligand>
</feature>
<feature type="binding site" evidence="1">
    <location>
        <position position="242"/>
    </location>
    <ligand>
        <name>Zn(2+)</name>
        <dbReference type="ChEBI" id="CHEBI:29105"/>
    </ligand>
</feature>
<organism>
    <name type="scientific">Shewanella woodyi (strain ATCC 51908 / MS32)</name>
    <dbReference type="NCBI Taxonomy" id="392500"/>
    <lineage>
        <taxon>Bacteria</taxon>
        <taxon>Pseudomonadati</taxon>
        <taxon>Pseudomonadota</taxon>
        <taxon>Gammaproteobacteria</taxon>
        <taxon>Alteromonadales</taxon>
        <taxon>Shewanellaceae</taxon>
        <taxon>Shewanella</taxon>
    </lineage>
</organism>
<proteinExistence type="inferred from homology"/>
<protein>
    <recommendedName>
        <fullName evidence="1">UDP-3-O-acyl-N-acetylglucosamine deacetylase</fullName>
        <shortName evidence="1">UDP-3-O-acyl-GlcNAc deacetylase</shortName>
        <ecNumber evidence="1">3.5.1.108</ecNumber>
    </recommendedName>
    <alternativeName>
        <fullName evidence="1">UDP-3-O-[R-3-hydroxymyristoyl]-N-acetylglucosamine deacetylase</fullName>
    </alternativeName>
</protein>
<name>LPXC_SHEWM</name>